<name>CRYD_GLOVI</name>
<feature type="chain" id="PRO_0000235308" description="Cryptochrome DASH">
    <location>
        <begin position="1"/>
        <end position="500"/>
    </location>
</feature>
<feature type="domain" description="Photolyase/cryptochrome alpha/beta">
    <location>
        <begin position="4"/>
        <end position="138"/>
    </location>
</feature>
<sequence length="500" mass="57263">MSTKTVLVWYRNDLRVHDHEPLTSALHKNARVVALYCFDPRQFGKAPFGFEKTGPFRARFLLESVADLRRSLRQLGSDLLVRRGHPEEVIPALVSELEIAAVHYHGEVTSEELVVERDLQAALAPLNVPVRSFWGTTLVHPDDLPFAIEAIPELFTDFRKQVERSAAINPPLPAPAKLPPLPAVDPGEIPQLADLGLESPVTDERAVLQFKGGETSGLARLEEYFWQKSLLKSYKQTRNGMLGADYSSKFSAWLALGCLSARYIHEQVQTYETKRIKNDSTYWLIFELLWRDYFRFIAAKHGDRLFYTAGLRGLDIPWKEDWERFELWRTGQTGFPLVDANMRELAATGFMSNRGRQNVASFLTKNLGIHWHMGAEWFESRLIDYDVASNWGNWNYTAGVGNDARGFRFFNILKQARDYDPDGAYVKHWLPELAGLPPARVHEPWKLLPVEQKRFGVRLGVDYPQPVVDLFQSAAANEAIYNAAWEHHHRKRRGQPRSRT</sequence>
<evidence type="ECO:0000250" key="1"/>
<evidence type="ECO:0000305" key="2"/>
<protein>
    <recommendedName>
        <fullName>Cryptochrome DASH</fullName>
    </recommendedName>
</protein>
<proteinExistence type="inferred from homology"/>
<accession>Q7NMD1</accession>
<keyword id="KW-0157">Chromophore</keyword>
<keyword id="KW-0238">DNA-binding</keyword>
<keyword id="KW-0274">FAD</keyword>
<keyword id="KW-0285">Flavoprotein</keyword>
<keyword id="KW-1185">Reference proteome</keyword>
<keyword id="KW-0678">Repressor</keyword>
<keyword id="KW-0804">Transcription</keyword>
<keyword id="KW-0805">Transcription regulation</keyword>
<reference key="1">
    <citation type="journal article" date="2003" name="DNA Res.">
        <title>Complete genome structure of Gloeobacter violaceus PCC 7421, a cyanobacterium that lacks thylakoids.</title>
        <authorList>
            <person name="Nakamura Y."/>
            <person name="Kaneko T."/>
            <person name="Sato S."/>
            <person name="Mimuro M."/>
            <person name="Miyashita H."/>
            <person name="Tsuchiya T."/>
            <person name="Sasamoto S."/>
            <person name="Watanabe A."/>
            <person name="Kawashima K."/>
            <person name="Kishida Y."/>
            <person name="Kiyokawa C."/>
            <person name="Kohara M."/>
            <person name="Matsumoto M."/>
            <person name="Matsuno A."/>
            <person name="Nakazaki N."/>
            <person name="Shimpo S."/>
            <person name="Takeuchi C."/>
            <person name="Yamada M."/>
            <person name="Tabata S."/>
        </authorList>
    </citation>
    <scope>NUCLEOTIDE SEQUENCE [LARGE SCALE GENOMIC DNA]</scope>
    <source>
        <strain>ATCC 29082 / PCC 7421</strain>
    </source>
</reference>
<dbReference type="EMBL" id="BA000045">
    <property type="protein sequence ID" value="BAC88776.1"/>
    <property type="molecule type" value="Genomic_DNA"/>
</dbReference>
<dbReference type="RefSeq" id="NP_923781.1">
    <property type="nucleotide sequence ID" value="NC_005125.1"/>
</dbReference>
<dbReference type="RefSeq" id="WP_011140837.1">
    <property type="nucleotide sequence ID" value="NC_005125.1"/>
</dbReference>
<dbReference type="SMR" id="Q7NMD1"/>
<dbReference type="STRING" id="251221.gene:10758313"/>
<dbReference type="EnsemblBacteria" id="BAC88776">
    <property type="protein sequence ID" value="BAC88776"/>
    <property type="gene ID" value="BAC88776"/>
</dbReference>
<dbReference type="KEGG" id="gvi:glr0835"/>
<dbReference type="PATRIC" id="fig|251221.4.peg.853"/>
<dbReference type="eggNOG" id="COG0415">
    <property type="taxonomic scope" value="Bacteria"/>
</dbReference>
<dbReference type="HOGENOM" id="CLU_010348_6_2_3"/>
<dbReference type="InParanoid" id="Q7NMD1"/>
<dbReference type="OrthoDB" id="9772484at2"/>
<dbReference type="PhylomeDB" id="Q7NMD1"/>
<dbReference type="Proteomes" id="UP000000557">
    <property type="component" value="Chromosome"/>
</dbReference>
<dbReference type="GO" id="GO:0003677">
    <property type="term" value="F:DNA binding"/>
    <property type="evidence" value="ECO:0000318"/>
    <property type="project" value="GO_Central"/>
</dbReference>
<dbReference type="GO" id="GO:0003913">
    <property type="term" value="F:DNA photolyase activity"/>
    <property type="evidence" value="ECO:0007669"/>
    <property type="project" value="InterPro"/>
</dbReference>
<dbReference type="GO" id="GO:0071949">
    <property type="term" value="F:FAD binding"/>
    <property type="evidence" value="ECO:0000318"/>
    <property type="project" value="GO_Central"/>
</dbReference>
<dbReference type="GO" id="GO:0000719">
    <property type="term" value="P:photoreactive repair"/>
    <property type="evidence" value="ECO:0000318"/>
    <property type="project" value="GO_Central"/>
</dbReference>
<dbReference type="Gene3D" id="1.25.40.80">
    <property type="match status" value="1"/>
</dbReference>
<dbReference type="Gene3D" id="1.10.579.10">
    <property type="entry name" value="DNA Cyclobutane Dipyrimidine Photolyase, subunit A, domain 3"/>
    <property type="match status" value="1"/>
</dbReference>
<dbReference type="Gene3D" id="3.40.50.620">
    <property type="entry name" value="HUPs"/>
    <property type="match status" value="1"/>
</dbReference>
<dbReference type="InterPro" id="IPR014133">
    <property type="entry name" value="Cry_DASH"/>
</dbReference>
<dbReference type="InterPro" id="IPR036134">
    <property type="entry name" value="Crypto/Photolyase_FAD-like_sf"/>
</dbReference>
<dbReference type="InterPro" id="IPR036155">
    <property type="entry name" value="Crypto/Photolyase_N_sf"/>
</dbReference>
<dbReference type="InterPro" id="IPR005101">
    <property type="entry name" value="Cryptochr/Photolyase_FAD-bd"/>
</dbReference>
<dbReference type="InterPro" id="IPR002081">
    <property type="entry name" value="Cryptochrome/DNA_photolyase_1"/>
</dbReference>
<dbReference type="InterPro" id="IPR018394">
    <property type="entry name" value="DNA_photolyase_1_CS_C"/>
</dbReference>
<dbReference type="InterPro" id="IPR006050">
    <property type="entry name" value="DNA_photolyase_N"/>
</dbReference>
<dbReference type="InterPro" id="IPR014729">
    <property type="entry name" value="Rossmann-like_a/b/a_fold"/>
</dbReference>
<dbReference type="NCBIfam" id="TIGR02765">
    <property type="entry name" value="crypto_DASH"/>
    <property type="match status" value="1"/>
</dbReference>
<dbReference type="PANTHER" id="PTHR11455">
    <property type="entry name" value="CRYPTOCHROME"/>
    <property type="match status" value="1"/>
</dbReference>
<dbReference type="PANTHER" id="PTHR11455:SF22">
    <property type="entry name" value="CRYPTOCHROME DASH"/>
    <property type="match status" value="1"/>
</dbReference>
<dbReference type="Pfam" id="PF00875">
    <property type="entry name" value="DNA_photolyase"/>
    <property type="match status" value="1"/>
</dbReference>
<dbReference type="Pfam" id="PF03441">
    <property type="entry name" value="FAD_binding_7"/>
    <property type="match status" value="1"/>
</dbReference>
<dbReference type="PRINTS" id="PR00147">
    <property type="entry name" value="DNAPHOTLYASE"/>
</dbReference>
<dbReference type="SUPFAM" id="SSF48173">
    <property type="entry name" value="Cryptochrome/photolyase FAD-binding domain"/>
    <property type="match status" value="1"/>
</dbReference>
<dbReference type="SUPFAM" id="SSF52425">
    <property type="entry name" value="Cryptochrome/photolyase, N-terminal domain"/>
    <property type="match status" value="1"/>
</dbReference>
<dbReference type="PROSITE" id="PS00394">
    <property type="entry name" value="DNA_PHOTOLYASES_1_1"/>
    <property type="match status" value="1"/>
</dbReference>
<dbReference type="PROSITE" id="PS51645">
    <property type="entry name" value="PHR_CRY_ALPHA_BETA"/>
    <property type="match status" value="1"/>
</dbReference>
<organism>
    <name type="scientific">Gloeobacter violaceus (strain ATCC 29082 / PCC 7421)</name>
    <dbReference type="NCBI Taxonomy" id="251221"/>
    <lineage>
        <taxon>Bacteria</taxon>
        <taxon>Bacillati</taxon>
        <taxon>Cyanobacteriota</taxon>
        <taxon>Cyanophyceae</taxon>
        <taxon>Gloeobacterales</taxon>
        <taxon>Gloeobacteraceae</taxon>
        <taxon>Gloeobacter</taxon>
    </lineage>
</organism>
<gene>
    <name type="primary">cry</name>
    <name type="synonym">phrA</name>
    <name type="ordered locus">glr0835</name>
</gene>
<comment type="function">
    <text evidence="1">May have a photoreceptor function. Binds DNA; probably functions as a transcriptional repressor (By similarity).</text>
</comment>
<comment type="cofactor">
    <cofactor evidence="1">
        <name>FAD</name>
        <dbReference type="ChEBI" id="CHEBI:57692"/>
    </cofactor>
    <text evidence="1">Binds 1 FAD per subunit.</text>
</comment>
<comment type="cofactor">
    <cofactor evidence="1">
        <name>(6R)-5,10-methylene-5,6,7,8-tetrahydrofolate</name>
        <dbReference type="ChEBI" id="CHEBI:15636"/>
    </cofactor>
    <text evidence="1">Binds 1 5,10-methenyltetrahydrofolate (MTHF) per subunit.</text>
</comment>
<comment type="similarity">
    <text evidence="2">Belongs to the DNA photolyase class-1 family.</text>
</comment>